<evidence type="ECO:0000255" key="1"/>
<evidence type="ECO:0000256" key="2">
    <source>
        <dbReference type="SAM" id="MobiDB-lite"/>
    </source>
</evidence>
<evidence type="ECO:0000269" key="3">
    <source>
    </source>
</evidence>
<evidence type="ECO:0000303" key="4">
    <source>
    </source>
</evidence>
<evidence type="ECO:0000305" key="5"/>
<comment type="function">
    <text evidence="3">Peptide transporter; part of the gene cluster that mediates the biosynthesis of imizoquins A to D, tripeptide-derived alkaloids that serve a protective role against oxidative stress that are essential for normal germination (PubMed:29182847).</text>
</comment>
<comment type="subcellular location">
    <subcellularLocation>
        <location evidence="1">Membrane</location>
        <topology evidence="1">Multi-pass membrane protein</topology>
    </subcellularLocation>
</comment>
<comment type="induction">
    <text evidence="3">Expression is down-regulated by ralstonins, lipopeptides produced by the plant pathogenic bacteria Ralstonia solanacearum (PubMed:29182847). Expression is positively regulated by the imizoquins cluster-specific transcription regulator imqK (PubMed:29182847).</text>
</comment>
<comment type="similarity">
    <text evidence="5">Belongs to the major facilitator superfamily. Proton-dependent oligopeptide transporter (POT/PTR) (TC 2.A.17) family.</text>
</comment>
<dbReference type="EMBL" id="EQ963479">
    <property type="protein sequence ID" value="EED49605.1"/>
    <property type="molecule type" value="Genomic_DNA"/>
</dbReference>
<dbReference type="RefSeq" id="XP_002379986.1">
    <property type="nucleotide sequence ID" value="XM_002379945.1"/>
</dbReference>
<dbReference type="SMR" id="B8NI21"/>
<dbReference type="STRING" id="332952.B8NI21"/>
<dbReference type="EnsemblFungi" id="EED49605">
    <property type="protein sequence ID" value="EED49605"/>
    <property type="gene ID" value="AFLA_064260"/>
</dbReference>
<dbReference type="VEuPathDB" id="FungiDB:AFLA_008360"/>
<dbReference type="eggNOG" id="KOG1237">
    <property type="taxonomic scope" value="Eukaryota"/>
</dbReference>
<dbReference type="HOGENOM" id="CLU_004790_4_2_1"/>
<dbReference type="OMA" id="ITRMATG"/>
<dbReference type="GO" id="GO:0016020">
    <property type="term" value="C:membrane"/>
    <property type="evidence" value="ECO:0007669"/>
    <property type="project" value="UniProtKB-SubCell"/>
</dbReference>
<dbReference type="GO" id="GO:0022857">
    <property type="term" value="F:transmembrane transporter activity"/>
    <property type="evidence" value="ECO:0007669"/>
    <property type="project" value="InterPro"/>
</dbReference>
<dbReference type="Gene3D" id="1.20.1250.20">
    <property type="entry name" value="MFS general substrate transporter like domains"/>
    <property type="match status" value="1"/>
</dbReference>
<dbReference type="InterPro" id="IPR036259">
    <property type="entry name" value="MFS_trans_sf"/>
</dbReference>
<dbReference type="InterPro" id="IPR000109">
    <property type="entry name" value="POT_fam"/>
</dbReference>
<dbReference type="PANTHER" id="PTHR11654">
    <property type="entry name" value="OLIGOPEPTIDE TRANSPORTER-RELATED"/>
    <property type="match status" value="1"/>
</dbReference>
<dbReference type="Pfam" id="PF00854">
    <property type="entry name" value="PTR2"/>
    <property type="match status" value="1"/>
</dbReference>
<dbReference type="SUPFAM" id="SSF103473">
    <property type="entry name" value="MFS general substrate transporter"/>
    <property type="match status" value="1"/>
</dbReference>
<sequence>MTAPADSTEKSETSETTTLQTTEVSTVDVDPDLPRVLAKVPGTVWVVAFIAAAERFTYWGITTPWQLHAKPPQASEFARCIRPRRSESIHDIQCLHVFLLFNTNSFRDNLGRLSRSLSDIAPEFDKRFRKLPPTGNILPKAGSVLSCAIRGRFQLDAAMPSYQREHFAKEVSWDETFVNEIRRGLVACRVILGFILFFTCLSQASNNLISQAGQMKTYGIPNDTITAMNPIFCVIMGPVIQKGLYPLLNKNNVKFQSITRMATGFIMMSASMAFAAGVQKIIYDTGPCYDRPLTCPGAENGRIPNQVNVFLQTPTYIILAVAEIFSFVTLSEYTYTKAPTDMKAVVQALGQLGAAAGSAIGIAITPLAHDPSLIWMYTGLAVAMFLVAVVFWILFKKYNAIDREDK</sequence>
<name>IMQD_ASPFN</name>
<feature type="chain" id="PRO_0000444548" description="Peptide transporter imqD">
    <location>
        <begin position="1"/>
        <end position="406"/>
    </location>
</feature>
<feature type="transmembrane region" description="Helical" evidence="1">
    <location>
        <begin position="184"/>
        <end position="204"/>
    </location>
</feature>
<feature type="transmembrane region" description="Helical" evidence="1">
    <location>
        <begin position="220"/>
        <end position="240"/>
    </location>
</feature>
<feature type="transmembrane region" description="Helical" evidence="1">
    <location>
        <begin position="262"/>
        <end position="282"/>
    </location>
</feature>
<feature type="transmembrane region" description="Helical" evidence="1">
    <location>
        <begin position="309"/>
        <end position="329"/>
    </location>
</feature>
<feature type="transmembrane region" description="Helical" evidence="1">
    <location>
        <begin position="344"/>
        <end position="364"/>
    </location>
</feature>
<feature type="transmembrane region" description="Helical" evidence="1">
    <location>
        <begin position="373"/>
        <end position="393"/>
    </location>
</feature>
<feature type="region of interest" description="Disordered" evidence="2">
    <location>
        <begin position="1"/>
        <end position="25"/>
    </location>
</feature>
<feature type="compositionally biased region" description="Low complexity" evidence="2">
    <location>
        <begin position="14"/>
        <end position="25"/>
    </location>
</feature>
<keyword id="KW-0472">Membrane</keyword>
<keyword id="KW-0812">Transmembrane</keyword>
<keyword id="KW-1133">Transmembrane helix</keyword>
<accession>B8NI21</accession>
<protein>
    <recommendedName>
        <fullName evidence="4">Peptide transporter imqD</fullName>
    </recommendedName>
    <alternativeName>
        <fullName evidence="4">Imizoquin biosynthesis cluster protein D</fullName>
    </alternativeName>
</protein>
<gene>
    <name evidence="4" type="primary">imqD</name>
    <name type="ORF">AFLA_064260</name>
</gene>
<organism>
    <name type="scientific">Aspergillus flavus (strain ATCC 200026 / FGSC A1120 / IAM 13836 / NRRL 3357 / JCM 12722 / SRRC 167)</name>
    <dbReference type="NCBI Taxonomy" id="332952"/>
    <lineage>
        <taxon>Eukaryota</taxon>
        <taxon>Fungi</taxon>
        <taxon>Dikarya</taxon>
        <taxon>Ascomycota</taxon>
        <taxon>Pezizomycotina</taxon>
        <taxon>Eurotiomycetes</taxon>
        <taxon>Eurotiomycetidae</taxon>
        <taxon>Eurotiales</taxon>
        <taxon>Aspergillaceae</taxon>
        <taxon>Aspergillus</taxon>
        <taxon>Aspergillus subgen. Circumdati</taxon>
    </lineage>
</organism>
<proteinExistence type="evidence at transcript level"/>
<reference key="1">
    <citation type="journal article" date="2015" name="Genome Announc.">
        <title>Genome sequence of Aspergillus flavus NRRL 3357, a strain that causes aflatoxin contamination of food and feed.</title>
        <authorList>
            <person name="Nierman W.C."/>
            <person name="Yu J."/>
            <person name="Fedorova-Abrams N.D."/>
            <person name="Losada L."/>
            <person name="Cleveland T.E."/>
            <person name="Bhatnagar D."/>
            <person name="Bennett J.W."/>
            <person name="Dean R."/>
            <person name="Payne G.A."/>
        </authorList>
    </citation>
    <scope>NUCLEOTIDE SEQUENCE [LARGE SCALE GENOMIC DNA]</scope>
    <source>
        <strain>ATCC 200026 / FGSC A1120 / IAM 13836 / NRRL 3357 / JCM 12722 / SRRC 167</strain>
    </source>
</reference>
<reference key="2">
    <citation type="journal article" date="2018" name="ACS Chem. Biol.">
        <title>NRPS-derived isoquinolines and lipopetides mediate antagonism between plant pathogenic fungi and bacteria.</title>
        <authorList>
            <person name="Khalid S."/>
            <person name="Baccile J.A."/>
            <person name="Spraker J.E."/>
            <person name="Tannous J."/>
            <person name="Imran M."/>
            <person name="Schroeder F.C."/>
            <person name="Keller N.P."/>
        </authorList>
    </citation>
    <scope>INDUCTION</scope>
    <scope>FUNCTION</scope>
</reference>